<organism>
    <name type="scientific">Petrotoga mobilis (strain DSM 10674 / SJ95)</name>
    <dbReference type="NCBI Taxonomy" id="403833"/>
    <lineage>
        <taxon>Bacteria</taxon>
        <taxon>Thermotogati</taxon>
        <taxon>Thermotogota</taxon>
        <taxon>Thermotogae</taxon>
        <taxon>Petrotogales</taxon>
        <taxon>Petrotogaceae</taxon>
        <taxon>Petrotoga</taxon>
    </lineage>
</organism>
<keyword id="KW-0004">4Fe-4S</keyword>
<keyword id="KW-0342">GTP-binding</keyword>
<keyword id="KW-0408">Iron</keyword>
<keyword id="KW-0411">Iron-sulfur</keyword>
<keyword id="KW-0456">Lyase</keyword>
<keyword id="KW-0479">Metal-binding</keyword>
<keyword id="KW-0501">Molybdenum cofactor biosynthesis</keyword>
<keyword id="KW-0547">Nucleotide-binding</keyword>
<keyword id="KW-0949">S-adenosyl-L-methionine</keyword>
<feature type="chain" id="PRO_1000085704" description="GTP 3',8-cyclase">
    <location>
        <begin position="1"/>
        <end position="323"/>
    </location>
</feature>
<feature type="domain" description="Radical SAM core" evidence="2">
    <location>
        <begin position="4"/>
        <end position="228"/>
    </location>
</feature>
<feature type="binding site" evidence="1">
    <location>
        <position position="13"/>
    </location>
    <ligand>
        <name>GTP</name>
        <dbReference type="ChEBI" id="CHEBI:37565"/>
    </ligand>
</feature>
<feature type="binding site" evidence="1">
    <location>
        <position position="20"/>
    </location>
    <ligand>
        <name>[4Fe-4S] cluster</name>
        <dbReference type="ChEBI" id="CHEBI:49883"/>
        <label>1</label>
        <note>4Fe-4S-S-AdoMet</note>
    </ligand>
</feature>
<feature type="binding site" evidence="1">
    <location>
        <position position="24"/>
    </location>
    <ligand>
        <name>[4Fe-4S] cluster</name>
        <dbReference type="ChEBI" id="CHEBI:49883"/>
        <label>1</label>
        <note>4Fe-4S-S-AdoMet</note>
    </ligand>
</feature>
<feature type="binding site" evidence="1">
    <location>
        <position position="26"/>
    </location>
    <ligand>
        <name>S-adenosyl-L-methionine</name>
        <dbReference type="ChEBI" id="CHEBI:59789"/>
    </ligand>
</feature>
<feature type="binding site" evidence="1">
    <location>
        <position position="27"/>
    </location>
    <ligand>
        <name>[4Fe-4S] cluster</name>
        <dbReference type="ChEBI" id="CHEBI:49883"/>
        <label>1</label>
        <note>4Fe-4S-S-AdoMet</note>
    </ligand>
</feature>
<feature type="binding site" evidence="1">
    <location>
        <position position="63"/>
    </location>
    <ligand>
        <name>GTP</name>
        <dbReference type="ChEBI" id="CHEBI:37565"/>
    </ligand>
</feature>
<feature type="binding site" evidence="1">
    <location>
        <position position="67"/>
    </location>
    <ligand>
        <name>S-adenosyl-L-methionine</name>
        <dbReference type="ChEBI" id="CHEBI:59789"/>
    </ligand>
</feature>
<feature type="binding site" evidence="1">
    <location>
        <position position="94"/>
    </location>
    <ligand>
        <name>GTP</name>
        <dbReference type="ChEBI" id="CHEBI:37565"/>
    </ligand>
</feature>
<feature type="binding site" evidence="1">
    <location>
        <position position="118"/>
    </location>
    <ligand>
        <name>S-adenosyl-L-methionine</name>
        <dbReference type="ChEBI" id="CHEBI:59789"/>
    </ligand>
</feature>
<feature type="binding site" evidence="1">
    <location>
        <position position="155"/>
    </location>
    <ligand>
        <name>GTP</name>
        <dbReference type="ChEBI" id="CHEBI:37565"/>
    </ligand>
</feature>
<feature type="binding site" evidence="1">
    <location>
        <position position="189"/>
    </location>
    <ligand>
        <name>S-adenosyl-L-methionine</name>
        <dbReference type="ChEBI" id="CHEBI:59789"/>
    </ligand>
</feature>
<feature type="binding site" evidence="1">
    <location>
        <position position="252"/>
    </location>
    <ligand>
        <name>[4Fe-4S] cluster</name>
        <dbReference type="ChEBI" id="CHEBI:49883"/>
        <label>2</label>
        <note>4Fe-4S-substrate</note>
    </ligand>
</feature>
<feature type="binding site" evidence="1">
    <location>
        <position position="255"/>
    </location>
    <ligand>
        <name>[4Fe-4S] cluster</name>
        <dbReference type="ChEBI" id="CHEBI:49883"/>
        <label>2</label>
        <note>4Fe-4S-substrate</note>
    </ligand>
</feature>
<feature type="binding site" evidence="1">
    <location>
        <begin position="257"/>
        <end position="259"/>
    </location>
    <ligand>
        <name>GTP</name>
        <dbReference type="ChEBI" id="CHEBI:37565"/>
    </ligand>
</feature>
<feature type="binding site" evidence="1">
    <location>
        <position position="269"/>
    </location>
    <ligand>
        <name>[4Fe-4S] cluster</name>
        <dbReference type="ChEBI" id="CHEBI:49883"/>
        <label>2</label>
        <note>4Fe-4S-substrate</note>
    </ligand>
</feature>
<accession>A9BF51</accession>
<comment type="function">
    <text evidence="1">Catalyzes the cyclization of GTP to (8S)-3',8-cyclo-7,8-dihydroguanosine 5'-triphosphate.</text>
</comment>
<comment type="catalytic activity">
    <reaction evidence="1">
        <text>GTP + AH2 + S-adenosyl-L-methionine = (8S)-3',8-cyclo-7,8-dihydroguanosine 5'-triphosphate + 5'-deoxyadenosine + L-methionine + A + H(+)</text>
        <dbReference type="Rhea" id="RHEA:49576"/>
        <dbReference type="ChEBI" id="CHEBI:13193"/>
        <dbReference type="ChEBI" id="CHEBI:15378"/>
        <dbReference type="ChEBI" id="CHEBI:17319"/>
        <dbReference type="ChEBI" id="CHEBI:17499"/>
        <dbReference type="ChEBI" id="CHEBI:37565"/>
        <dbReference type="ChEBI" id="CHEBI:57844"/>
        <dbReference type="ChEBI" id="CHEBI:59789"/>
        <dbReference type="ChEBI" id="CHEBI:131766"/>
        <dbReference type="EC" id="4.1.99.22"/>
    </reaction>
</comment>
<comment type="cofactor">
    <cofactor evidence="1">
        <name>[4Fe-4S] cluster</name>
        <dbReference type="ChEBI" id="CHEBI:49883"/>
    </cofactor>
    <text evidence="1">Binds 2 [4Fe-4S] clusters. Binds 1 [4Fe-4S] cluster coordinated with 3 cysteines and an exchangeable S-adenosyl-L-methionine and 1 [4Fe-4S] cluster coordinated with 3 cysteines and the GTP-derived substrate.</text>
</comment>
<comment type="pathway">
    <text evidence="1">Cofactor biosynthesis; molybdopterin biosynthesis.</text>
</comment>
<comment type="subunit">
    <text evidence="1">Monomer and homodimer.</text>
</comment>
<comment type="similarity">
    <text evidence="1">Belongs to the radical SAM superfamily. MoaA family.</text>
</comment>
<sequence length="323" mass="36282">MIDKYGRSIDYLRVSITDRCNLRCIYCMPPQGVTFKTHSSILRYEEIIKIVEVGTELGIKKVRITGGEPLVRQGVVNLIKELRKIPELEDITMTTNGVLLPKYAFALKRAGLSRVNISLDSLNPDTYKTITRRGEFSQAIEGIKAALEVGLNPVKINTVVMKGINDNELENFVNLTIDKDLHVRFIEYMPMGETSLLSGNYYVSLNEFKEIIIDKMGMVPVNIQNNGPSKDFKVPGAKGTVGFITAISHNFCSTCNRMRLTADGFLRPCLASDVEVNMRDEDGKISSEGVREKFEKALLLKPISHNFYKNDFFPKKNMSQIGG</sequence>
<name>MOAA_PETMO</name>
<evidence type="ECO:0000255" key="1">
    <source>
        <dbReference type="HAMAP-Rule" id="MF_01225"/>
    </source>
</evidence>
<evidence type="ECO:0000255" key="2">
    <source>
        <dbReference type="PROSITE-ProRule" id="PRU01266"/>
    </source>
</evidence>
<gene>
    <name evidence="1" type="primary">moaA</name>
    <name type="ordered locus">Pmob_0373</name>
</gene>
<dbReference type="EC" id="4.1.99.22" evidence="1"/>
<dbReference type="EMBL" id="CP000879">
    <property type="protein sequence ID" value="ABX31115.1"/>
    <property type="molecule type" value="Genomic_DNA"/>
</dbReference>
<dbReference type="RefSeq" id="WP_012208222.1">
    <property type="nucleotide sequence ID" value="NC_010003.1"/>
</dbReference>
<dbReference type="SMR" id="A9BF51"/>
<dbReference type="STRING" id="403833.Pmob_0373"/>
<dbReference type="KEGG" id="pmo:Pmob_0373"/>
<dbReference type="eggNOG" id="COG2896">
    <property type="taxonomic scope" value="Bacteria"/>
</dbReference>
<dbReference type="HOGENOM" id="CLU_009273_0_1_0"/>
<dbReference type="OrthoDB" id="9763993at2"/>
<dbReference type="UniPathway" id="UPA00344"/>
<dbReference type="Proteomes" id="UP000000789">
    <property type="component" value="Chromosome"/>
</dbReference>
<dbReference type="GO" id="GO:0051539">
    <property type="term" value="F:4 iron, 4 sulfur cluster binding"/>
    <property type="evidence" value="ECO:0007669"/>
    <property type="project" value="UniProtKB-UniRule"/>
</dbReference>
<dbReference type="GO" id="GO:0061799">
    <property type="term" value="F:cyclic pyranopterin monophosphate synthase activity"/>
    <property type="evidence" value="ECO:0007669"/>
    <property type="project" value="TreeGrafter"/>
</dbReference>
<dbReference type="GO" id="GO:0061798">
    <property type="term" value="F:GTP 3',8'-cyclase activity"/>
    <property type="evidence" value="ECO:0007669"/>
    <property type="project" value="UniProtKB-UniRule"/>
</dbReference>
<dbReference type="GO" id="GO:0005525">
    <property type="term" value="F:GTP binding"/>
    <property type="evidence" value="ECO:0007669"/>
    <property type="project" value="UniProtKB-UniRule"/>
</dbReference>
<dbReference type="GO" id="GO:0046872">
    <property type="term" value="F:metal ion binding"/>
    <property type="evidence" value="ECO:0007669"/>
    <property type="project" value="UniProtKB-KW"/>
</dbReference>
<dbReference type="GO" id="GO:1904047">
    <property type="term" value="F:S-adenosyl-L-methionine binding"/>
    <property type="evidence" value="ECO:0007669"/>
    <property type="project" value="UniProtKB-UniRule"/>
</dbReference>
<dbReference type="GO" id="GO:0006777">
    <property type="term" value="P:Mo-molybdopterin cofactor biosynthetic process"/>
    <property type="evidence" value="ECO:0007669"/>
    <property type="project" value="UniProtKB-UniRule"/>
</dbReference>
<dbReference type="CDD" id="cd01335">
    <property type="entry name" value="Radical_SAM"/>
    <property type="match status" value="1"/>
</dbReference>
<dbReference type="CDD" id="cd21117">
    <property type="entry name" value="Twitch_MoaA"/>
    <property type="match status" value="1"/>
</dbReference>
<dbReference type="Gene3D" id="3.20.20.70">
    <property type="entry name" value="Aldolase class I"/>
    <property type="match status" value="1"/>
</dbReference>
<dbReference type="HAMAP" id="MF_01225_B">
    <property type="entry name" value="MoaA_B"/>
    <property type="match status" value="1"/>
</dbReference>
<dbReference type="InterPro" id="IPR013785">
    <property type="entry name" value="Aldolase_TIM"/>
</dbReference>
<dbReference type="InterPro" id="IPR006638">
    <property type="entry name" value="Elp3/MiaA/NifB-like_rSAM"/>
</dbReference>
<dbReference type="InterPro" id="IPR013483">
    <property type="entry name" value="MoaA"/>
</dbReference>
<dbReference type="InterPro" id="IPR000385">
    <property type="entry name" value="MoaA_NifB_PqqE_Fe-S-bd_CS"/>
</dbReference>
<dbReference type="InterPro" id="IPR010505">
    <property type="entry name" value="MoaA_twitch"/>
</dbReference>
<dbReference type="InterPro" id="IPR050105">
    <property type="entry name" value="MoCo_biosynth_MoaA/MoaC"/>
</dbReference>
<dbReference type="InterPro" id="IPR007197">
    <property type="entry name" value="rSAM"/>
</dbReference>
<dbReference type="NCBIfam" id="TIGR02666">
    <property type="entry name" value="moaA"/>
    <property type="match status" value="1"/>
</dbReference>
<dbReference type="NCBIfam" id="NF001199">
    <property type="entry name" value="PRK00164.2-1"/>
    <property type="match status" value="1"/>
</dbReference>
<dbReference type="PANTHER" id="PTHR22960:SF0">
    <property type="entry name" value="MOLYBDENUM COFACTOR BIOSYNTHESIS PROTEIN 1"/>
    <property type="match status" value="1"/>
</dbReference>
<dbReference type="PANTHER" id="PTHR22960">
    <property type="entry name" value="MOLYBDOPTERIN COFACTOR SYNTHESIS PROTEIN A"/>
    <property type="match status" value="1"/>
</dbReference>
<dbReference type="Pfam" id="PF13353">
    <property type="entry name" value="Fer4_12"/>
    <property type="match status" value="1"/>
</dbReference>
<dbReference type="Pfam" id="PF06463">
    <property type="entry name" value="Mob_synth_C"/>
    <property type="match status" value="1"/>
</dbReference>
<dbReference type="Pfam" id="PF04055">
    <property type="entry name" value="Radical_SAM"/>
    <property type="match status" value="1"/>
</dbReference>
<dbReference type="SFLD" id="SFLDG01383">
    <property type="entry name" value="cyclic_pyranopterin_phosphate"/>
    <property type="match status" value="1"/>
</dbReference>
<dbReference type="SFLD" id="SFLDG01216">
    <property type="entry name" value="thioether_bond_formation_requi"/>
    <property type="match status" value="1"/>
</dbReference>
<dbReference type="SMART" id="SM00729">
    <property type="entry name" value="Elp3"/>
    <property type="match status" value="1"/>
</dbReference>
<dbReference type="SUPFAM" id="SSF102114">
    <property type="entry name" value="Radical SAM enzymes"/>
    <property type="match status" value="1"/>
</dbReference>
<dbReference type="PROSITE" id="PS01305">
    <property type="entry name" value="MOAA_NIFB_PQQE"/>
    <property type="match status" value="1"/>
</dbReference>
<dbReference type="PROSITE" id="PS51918">
    <property type="entry name" value="RADICAL_SAM"/>
    <property type="match status" value="1"/>
</dbReference>
<proteinExistence type="inferred from homology"/>
<reference key="1">
    <citation type="submission" date="2007-11" db="EMBL/GenBank/DDBJ databases">
        <title>Complete sequence of Petroga mobilis SJ95.</title>
        <authorList>
            <consortium name="US DOE Joint Genome Institute"/>
            <person name="Copeland A."/>
            <person name="Lucas S."/>
            <person name="Lapidus A."/>
            <person name="Barry K."/>
            <person name="Glavina del Rio T."/>
            <person name="Dalin E."/>
            <person name="Tice H."/>
            <person name="Pitluck S."/>
            <person name="Meincke L."/>
            <person name="Brettin T."/>
            <person name="Bruce D."/>
            <person name="Detter J.C."/>
            <person name="Han C."/>
            <person name="Kuske C.R."/>
            <person name="Schmutz J."/>
            <person name="Larimer F."/>
            <person name="Land M."/>
            <person name="Hauser L."/>
            <person name="Kyrpides N."/>
            <person name="Mikhailova N."/>
            <person name="Noll K."/>
            <person name="Richardson P."/>
        </authorList>
    </citation>
    <scope>NUCLEOTIDE SEQUENCE [LARGE SCALE GENOMIC DNA]</scope>
    <source>
        <strain>DSM 10674 / SJ95</strain>
    </source>
</reference>
<protein>
    <recommendedName>
        <fullName evidence="1">GTP 3',8-cyclase</fullName>
        <ecNumber evidence="1">4.1.99.22</ecNumber>
    </recommendedName>
    <alternativeName>
        <fullName evidence="1">Molybdenum cofactor biosynthesis protein A</fullName>
    </alternativeName>
</protein>